<evidence type="ECO:0000255" key="1">
    <source>
        <dbReference type="HAMAP-Rule" id="MF_00530"/>
    </source>
</evidence>
<proteinExistence type="inferred from homology"/>
<keyword id="KW-0066">ATP synthesis</keyword>
<keyword id="KW-0997">Cell inner membrane</keyword>
<keyword id="KW-1003">Cell membrane</keyword>
<keyword id="KW-0139">CF(1)</keyword>
<keyword id="KW-0375">Hydrogen ion transport</keyword>
<keyword id="KW-0406">Ion transport</keyword>
<keyword id="KW-0472">Membrane</keyword>
<keyword id="KW-1185">Reference proteome</keyword>
<keyword id="KW-0813">Transport</keyword>
<sequence length="140" mass="15044">MSKMRVEVVSTEQLIFSGEAEFVVAPATEGEIGVYPQHVPLLTRIKPGVLRLKVPGTKEEVLVAVSGGMMEVQPSLITVLADTAIRGEDLDEARANEAKRAAEDALKHATDDMSTAKAHAALAVAIAELKTLDYLKKRAH</sequence>
<accession>Q7P094</accession>
<organism>
    <name type="scientific">Chromobacterium violaceum (strain ATCC 12472 / DSM 30191 / JCM 1249 / CCUG 213 / NBRC 12614 / NCIMB 9131 / NCTC 9757 / MK)</name>
    <dbReference type="NCBI Taxonomy" id="243365"/>
    <lineage>
        <taxon>Bacteria</taxon>
        <taxon>Pseudomonadati</taxon>
        <taxon>Pseudomonadota</taxon>
        <taxon>Betaproteobacteria</taxon>
        <taxon>Neisseriales</taxon>
        <taxon>Chromobacteriaceae</taxon>
        <taxon>Chromobacterium</taxon>
    </lineage>
</organism>
<protein>
    <recommendedName>
        <fullName evidence="1">ATP synthase epsilon chain</fullName>
    </recommendedName>
    <alternativeName>
        <fullName evidence="1">ATP synthase F1 sector epsilon subunit</fullName>
    </alternativeName>
    <alternativeName>
        <fullName evidence="1">F-ATPase epsilon subunit</fullName>
    </alternativeName>
</protein>
<reference key="1">
    <citation type="journal article" date="2003" name="Proc. Natl. Acad. Sci. U.S.A.">
        <title>The complete genome sequence of Chromobacterium violaceum reveals remarkable and exploitable bacterial adaptability.</title>
        <authorList>
            <person name="Vasconcelos A.T.R."/>
            <person name="de Almeida D.F."/>
            <person name="Hungria M."/>
            <person name="Guimaraes C.T."/>
            <person name="Antonio R.V."/>
            <person name="Almeida F.C."/>
            <person name="de Almeida L.G.P."/>
            <person name="de Almeida R."/>
            <person name="Alves-Gomes J.A."/>
            <person name="Andrade E.M."/>
            <person name="Araripe J."/>
            <person name="de Araujo M.F.F."/>
            <person name="Astolfi-Filho S."/>
            <person name="Azevedo V."/>
            <person name="Baptista A.J."/>
            <person name="Bataus L.A.M."/>
            <person name="Batista J.S."/>
            <person name="Belo A."/>
            <person name="van den Berg C."/>
            <person name="Bogo M."/>
            <person name="Bonatto S."/>
            <person name="Bordignon J."/>
            <person name="Brigido M.M."/>
            <person name="Brito C.A."/>
            <person name="Brocchi M."/>
            <person name="Burity H.A."/>
            <person name="Camargo A.A."/>
            <person name="Cardoso D.D.P."/>
            <person name="Carneiro N.P."/>
            <person name="Carraro D.M."/>
            <person name="Carvalho C.M.B."/>
            <person name="Cascardo J.C.M."/>
            <person name="Cavada B.S."/>
            <person name="Chueire L.M.O."/>
            <person name="Creczynski-Pasa T.B."/>
            <person name="Cunha-Junior N.C."/>
            <person name="Fagundes N."/>
            <person name="Falcao C.L."/>
            <person name="Fantinatti F."/>
            <person name="Farias I.P."/>
            <person name="Felipe M.S.S."/>
            <person name="Ferrari L.P."/>
            <person name="Ferro J.A."/>
            <person name="Ferro M.I.T."/>
            <person name="Franco G.R."/>
            <person name="Freitas N.S.A."/>
            <person name="Furlan L.R."/>
            <person name="Gazzinelli R.T."/>
            <person name="Gomes E.A."/>
            <person name="Goncalves P.R."/>
            <person name="Grangeiro T.B."/>
            <person name="Grattapaglia D."/>
            <person name="Grisard E.C."/>
            <person name="Hanna E.S."/>
            <person name="Jardim S.N."/>
            <person name="Laurino J."/>
            <person name="Leoi L.C.T."/>
            <person name="Lima L.F.A."/>
            <person name="Loureiro M.F."/>
            <person name="Lyra M.C.C.P."/>
            <person name="Madeira H.M.F."/>
            <person name="Manfio G.P."/>
            <person name="Maranhao A.Q."/>
            <person name="Martins W.S."/>
            <person name="di Mauro S.M.Z."/>
            <person name="de Medeiros S.R.B."/>
            <person name="Meissner R.V."/>
            <person name="Moreira M.A.M."/>
            <person name="Nascimento F.F."/>
            <person name="Nicolas M.F."/>
            <person name="Oliveira J.G."/>
            <person name="Oliveira S.C."/>
            <person name="Paixao R.F.C."/>
            <person name="Parente J.A."/>
            <person name="Pedrosa F.O."/>
            <person name="Pena S.D.J."/>
            <person name="Pereira J.O."/>
            <person name="Pereira M."/>
            <person name="Pinto L.S.R.C."/>
            <person name="Pinto L.S."/>
            <person name="Porto J.I.R."/>
            <person name="Potrich D.P."/>
            <person name="Ramalho-Neto C.E."/>
            <person name="Reis A.M.M."/>
            <person name="Rigo L.U."/>
            <person name="Rondinelli E."/>
            <person name="Santos E.B.P."/>
            <person name="Santos F.R."/>
            <person name="Schneider M.P.C."/>
            <person name="Seuanez H.N."/>
            <person name="Silva A.M.R."/>
            <person name="da Silva A.L.C."/>
            <person name="Silva D.W."/>
            <person name="Silva R."/>
            <person name="Simoes I.C."/>
            <person name="Simon D."/>
            <person name="Soares C.M.A."/>
            <person name="Soares R.B.A."/>
            <person name="Souza E.M."/>
            <person name="Souza K.R.L."/>
            <person name="Souza R.C."/>
            <person name="Steffens M.B.R."/>
            <person name="Steindel M."/>
            <person name="Teixeira S.R."/>
            <person name="Urmenyi T."/>
            <person name="Vettore A."/>
            <person name="Wassem R."/>
            <person name="Zaha A."/>
            <person name="Simpson A.J.G."/>
        </authorList>
    </citation>
    <scope>NUCLEOTIDE SEQUENCE [LARGE SCALE GENOMIC DNA]</scope>
    <source>
        <strain>ATCC 12472 / DSM 30191 / JCM 1249 / CCUG 213 / NBRC 12614 / NCIMB 9131 / NCTC 9757 / MK</strain>
    </source>
</reference>
<dbReference type="EMBL" id="AE016825">
    <property type="protein sequence ID" value="AAQ58349.1"/>
    <property type="molecule type" value="Genomic_DNA"/>
</dbReference>
<dbReference type="RefSeq" id="WP_011134228.1">
    <property type="nucleotide sequence ID" value="NC_005085.1"/>
</dbReference>
<dbReference type="SMR" id="Q7P094"/>
<dbReference type="STRING" id="243365.CV_0673"/>
<dbReference type="GeneID" id="66365433"/>
<dbReference type="KEGG" id="cvi:CV_0673"/>
<dbReference type="eggNOG" id="COG0355">
    <property type="taxonomic scope" value="Bacteria"/>
</dbReference>
<dbReference type="HOGENOM" id="CLU_084338_2_0_4"/>
<dbReference type="OrthoDB" id="9791445at2"/>
<dbReference type="Proteomes" id="UP000001424">
    <property type="component" value="Chromosome"/>
</dbReference>
<dbReference type="GO" id="GO:0005886">
    <property type="term" value="C:plasma membrane"/>
    <property type="evidence" value="ECO:0007669"/>
    <property type="project" value="UniProtKB-SubCell"/>
</dbReference>
<dbReference type="GO" id="GO:0045259">
    <property type="term" value="C:proton-transporting ATP synthase complex"/>
    <property type="evidence" value="ECO:0007669"/>
    <property type="project" value="UniProtKB-KW"/>
</dbReference>
<dbReference type="GO" id="GO:0005524">
    <property type="term" value="F:ATP binding"/>
    <property type="evidence" value="ECO:0007669"/>
    <property type="project" value="UniProtKB-UniRule"/>
</dbReference>
<dbReference type="GO" id="GO:0046933">
    <property type="term" value="F:proton-transporting ATP synthase activity, rotational mechanism"/>
    <property type="evidence" value="ECO:0007669"/>
    <property type="project" value="UniProtKB-UniRule"/>
</dbReference>
<dbReference type="CDD" id="cd12152">
    <property type="entry name" value="F1-ATPase_delta"/>
    <property type="match status" value="1"/>
</dbReference>
<dbReference type="FunFam" id="2.60.15.10:FF:000001">
    <property type="entry name" value="ATP synthase epsilon chain"/>
    <property type="match status" value="1"/>
</dbReference>
<dbReference type="Gene3D" id="1.20.5.440">
    <property type="entry name" value="ATP synthase delta/epsilon subunit, C-terminal domain"/>
    <property type="match status" value="1"/>
</dbReference>
<dbReference type="Gene3D" id="2.60.15.10">
    <property type="entry name" value="F0F1 ATP synthase delta/epsilon subunit, N-terminal"/>
    <property type="match status" value="1"/>
</dbReference>
<dbReference type="HAMAP" id="MF_00530">
    <property type="entry name" value="ATP_synth_epsil_bac"/>
    <property type="match status" value="1"/>
</dbReference>
<dbReference type="InterPro" id="IPR036794">
    <property type="entry name" value="ATP_F1_dsu/esu_C_sf"/>
</dbReference>
<dbReference type="InterPro" id="IPR001469">
    <property type="entry name" value="ATP_synth_F1_dsu/esu"/>
</dbReference>
<dbReference type="InterPro" id="IPR020546">
    <property type="entry name" value="ATP_synth_F1_dsu/esu_N"/>
</dbReference>
<dbReference type="InterPro" id="IPR020547">
    <property type="entry name" value="ATP_synth_F1_esu_C"/>
</dbReference>
<dbReference type="InterPro" id="IPR036771">
    <property type="entry name" value="ATPsynth_dsu/esu_N"/>
</dbReference>
<dbReference type="NCBIfam" id="TIGR01216">
    <property type="entry name" value="ATP_synt_epsi"/>
    <property type="match status" value="1"/>
</dbReference>
<dbReference type="NCBIfam" id="NF001847">
    <property type="entry name" value="PRK00571.1-4"/>
    <property type="match status" value="1"/>
</dbReference>
<dbReference type="PANTHER" id="PTHR13822">
    <property type="entry name" value="ATP SYNTHASE DELTA/EPSILON CHAIN"/>
    <property type="match status" value="1"/>
</dbReference>
<dbReference type="PANTHER" id="PTHR13822:SF10">
    <property type="entry name" value="ATP SYNTHASE EPSILON CHAIN, CHLOROPLASTIC"/>
    <property type="match status" value="1"/>
</dbReference>
<dbReference type="Pfam" id="PF00401">
    <property type="entry name" value="ATP-synt_DE"/>
    <property type="match status" value="1"/>
</dbReference>
<dbReference type="Pfam" id="PF02823">
    <property type="entry name" value="ATP-synt_DE_N"/>
    <property type="match status" value="1"/>
</dbReference>
<dbReference type="SUPFAM" id="SSF46604">
    <property type="entry name" value="Epsilon subunit of F1F0-ATP synthase C-terminal domain"/>
    <property type="match status" value="1"/>
</dbReference>
<dbReference type="SUPFAM" id="SSF51344">
    <property type="entry name" value="Epsilon subunit of F1F0-ATP synthase N-terminal domain"/>
    <property type="match status" value="1"/>
</dbReference>
<gene>
    <name evidence="1" type="primary">atpC</name>
    <name type="ordered locus">CV_0673</name>
</gene>
<name>ATPE_CHRVO</name>
<feature type="chain" id="PRO_0000188121" description="ATP synthase epsilon chain">
    <location>
        <begin position="1"/>
        <end position="140"/>
    </location>
</feature>
<comment type="function">
    <text evidence="1">Produces ATP from ADP in the presence of a proton gradient across the membrane.</text>
</comment>
<comment type="subunit">
    <text>F-type ATPases have 2 components, CF(1) - the catalytic core - and CF(0) - the membrane proton channel. CF(1) has five subunits: alpha(3), beta(3), gamma(1), delta(1), epsilon(1). CF(0) has three main subunits: a, b and c.</text>
</comment>
<comment type="subcellular location">
    <subcellularLocation>
        <location evidence="1">Cell inner membrane</location>
        <topology evidence="1">Peripheral membrane protein</topology>
    </subcellularLocation>
</comment>
<comment type="similarity">
    <text evidence="1">Belongs to the ATPase epsilon chain family.</text>
</comment>